<proteinExistence type="evidence at transcript level"/>
<evidence type="ECO:0000250" key="1"/>
<evidence type="ECO:0000250" key="2">
    <source>
        <dbReference type="UniProtKB" id="Q8LQ68"/>
    </source>
</evidence>
<evidence type="ECO:0000255" key="3"/>
<evidence type="ECO:0000255" key="4">
    <source>
        <dbReference type="PROSITE-ProRule" id="PRU01084"/>
    </source>
</evidence>
<evidence type="ECO:0000269" key="5">
    <source>
    </source>
</evidence>
<evidence type="ECO:0000305" key="6"/>
<evidence type="ECO:0000305" key="7">
    <source>
    </source>
</evidence>
<accession>Q2KNB5</accession>
<accession>A0A0N7KKN6</accession>
<accession>Q75K74</accession>
<feature type="chain" id="PRO_0000247573" description="Hexokinase-10">
    <location>
        <begin position="1"/>
        <end position="504"/>
    </location>
</feature>
<feature type="transmembrane region" description="Helical" evidence="3">
    <location>
        <begin position="7"/>
        <end position="29"/>
    </location>
</feature>
<feature type="domain" description="Hexokinase" evidence="4">
    <location>
        <begin position="39"/>
        <end position="493"/>
    </location>
</feature>
<feature type="region of interest" description="Hexokinase small subdomain" evidence="4">
    <location>
        <begin position="94"/>
        <end position="226"/>
    </location>
</feature>
<feature type="region of interest" description="Hexokinase large subdomain" evidence="4">
    <location>
        <begin position="227"/>
        <end position="482"/>
    </location>
</feature>
<feature type="binding site" evidence="2">
    <location>
        <position position="108"/>
    </location>
    <ligand>
        <name>ADP</name>
        <dbReference type="ChEBI" id="CHEBI:456216"/>
    </ligand>
</feature>
<feature type="binding site" evidence="2">
    <location>
        <position position="109"/>
    </location>
    <ligand>
        <name>ADP</name>
        <dbReference type="ChEBI" id="CHEBI:456216"/>
    </ligand>
</feature>
<feature type="binding site" evidence="2">
    <location>
        <position position="192"/>
    </location>
    <ligand>
        <name>D-glucose</name>
        <dbReference type="ChEBI" id="CHEBI:4167"/>
    </ligand>
</feature>
<feature type="binding site" evidence="2">
    <location>
        <position position="193"/>
    </location>
    <ligand>
        <name>D-glucose</name>
        <dbReference type="ChEBI" id="CHEBI:4167"/>
    </ligand>
</feature>
<feature type="binding site" evidence="2">
    <location>
        <position position="227"/>
    </location>
    <ligand>
        <name>D-glucose</name>
        <dbReference type="ChEBI" id="CHEBI:4167"/>
    </ligand>
</feature>
<feature type="binding site" evidence="2">
    <location>
        <position position="254"/>
    </location>
    <ligand>
        <name>D-glucose</name>
        <dbReference type="ChEBI" id="CHEBI:4167"/>
    </ligand>
</feature>
<feature type="binding site" evidence="2">
    <location>
        <position position="282"/>
    </location>
    <ligand>
        <name>D-glucose</name>
        <dbReference type="ChEBI" id="CHEBI:4167"/>
    </ligand>
</feature>
<feature type="binding site" evidence="2">
    <location>
        <position position="313"/>
    </location>
    <ligand>
        <name>D-glucose</name>
        <dbReference type="ChEBI" id="CHEBI:4167"/>
    </ligand>
</feature>
<feature type="binding site" evidence="2">
    <location>
        <position position="447"/>
    </location>
    <ligand>
        <name>ADP</name>
        <dbReference type="ChEBI" id="CHEBI:456216"/>
    </ligand>
</feature>
<organism>
    <name type="scientific">Oryza sativa subsp. japonica</name>
    <name type="common">Rice</name>
    <dbReference type="NCBI Taxonomy" id="39947"/>
    <lineage>
        <taxon>Eukaryota</taxon>
        <taxon>Viridiplantae</taxon>
        <taxon>Streptophyta</taxon>
        <taxon>Embryophyta</taxon>
        <taxon>Tracheophyta</taxon>
        <taxon>Spermatophyta</taxon>
        <taxon>Magnoliopsida</taxon>
        <taxon>Liliopsida</taxon>
        <taxon>Poales</taxon>
        <taxon>Poaceae</taxon>
        <taxon>BOP clade</taxon>
        <taxon>Oryzoideae</taxon>
        <taxon>Oryzeae</taxon>
        <taxon>Oryzinae</taxon>
        <taxon>Oryza</taxon>
        <taxon>Oryza sativa</taxon>
    </lineage>
</organism>
<protein>
    <recommendedName>
        <fullName>Hexokinase-10</fullName>
        <ecNumber evidence="7">2.7.1.1</ecNumber>
    </recommendedName>
    <alternativeName>
        <fullName>Hexokinase-7</fullName>
    </alternativeName>
</protein>
<sequence>MEGRAAGWVRVAAVGWAVAACAVAAGMVARRGAARVRWNRAVAVVRDLEERCATPAELLQRVVNSLAIEMFAGLASDGGSKVRMLLTCVDALPDGSEEGISYAIDLGGTSFRVLKVELGAGSTIINRKVEHQPIPENLTKGTSDDLFNFIASALKNFIEREGGEVEGRALGFTFSFPVRQTSISSGTLIRWTKEFSIEEAVGKDVAQCLNEALARNGLNMKVNVLVNNTVGTLALGHYYDDDTVAAVIIGAGTNACYIERNDAIIKSLGRVTNSERTVVNVEWGSFRPPQIELTPYDICFNNETWNYYDQGFEKMISGVYLGEIARLVFQKMAEESDIFGTAVDGLSTPFVLSTPNLAAIREDDSPDLREVGKILEEHLKLPDVPLKTRKLVARVSDIITRRAARLAAAAIVAILQKIGCDGTLCGSTQVRTMRGVRRRTVVAIEGGLFEGYSVFREYLNEALVEILGEEIAATVSLRVMEEGSGTGAALLAAAYSSARQKNSE</sequence>
<name>HXK10_ORYSJ</name>
<comment type="function">
    <text evidence="5">Fructose and glucose phosphorylating enzyme.</text>
</comment>
<comment type="catalytic activity">
    <reaction evidence="7">
        <text>a D-hexose + ATP = a D-hexose 6-phosphate + ADP + H(+)</text>
        <dbReference type="Rhea" id="RHEA:22740"/>
        <dbReference type="ChEBI" id="CHEBI:4194"/>
        <dbReference type="ChEBI" id="CHEBI:15378"/>
        <dbReference type="ChEBI" id="CHEBI:30616"/>
        <dbReference type="ChEBI" id="CHEBI:229467"/>
        <dbReference type="ChEBI" id="CHEBI:456216"/>
        <dbReference type="EC" id="2.7.1.1"/>
    </reaction>
    <physiologicalReaction direction="left-to-right" evidence="7">
        <dbReference type="Rhea" id="RHEA:22741"/>
    </physiologicalReaction>
</comment>
<comment type="catalytic activity">
    <reaction evidence="7">
        <text>D-fructose + ATP = D-fructose 6-phosphate + ADP + H(+)</text>
        <dbReference type="Rhea" id="RHEA:16125"/>
        <dbReference type="ChEBI" id="CHEBI:15378"/>
        <dbReference type="ChEBI" id="CHEBI:30616"/>
        <dbReference type="ChEBI" id="CHEBI:37721"/>
        <dbReference type="ChEBI" id="CHEBI:61527"/>
        <dbReference type="ChEBI" id="CHEBI:456216"/>
        <dbReference type="EC" id="2.7.1.1"/>
    </reaction>
    <physiologicalReaction direction="left-to-right" evidence="7">
        <dbReference type="Rhea" id="RHEA:16126"/>
    </physiologicalReaction>
</comment>
<comment type="catalytic activity">
    <reaction evidence="7">
        <text>D-glucose + ATP = D-glucose 6-phosphate + ADP + H(+)</text>
        <dbReference type="Rhea" id="RHEA:17825"/>
        <dbReference type="ChEBI" id="CHEBI:4167"/>
        <dbReference type="ChEBI" id="CHEBI:15378"/>
        <dbReference type="ChEBI" id="CHEBI:30616"/>
        <dbReference type="ChEBI" id="CHEBI:61548"/>
        <dbReference type="ChEBI" id="CHEBI:456216"/>
        <dbReference type="EC" id="2.7.1.1"/>
    </reaction>
    <physiologicalReaction direction="left-to-right" evidence="7">
        <dbReference type="Rhea" id="RHEA:17826"/>
    </physiologicalReaction>
</comment>
<comment type="pathway">
    <text evidence="7">Carbohydrate metabolism; hexose metabolism.</text>
</comment>
<comment type="pathway">
    <text evidence="7">Carbohydrate degradation; glycolysis; D-glyceraldehyde 3-phosphate and glycerone phosphate from D-glucose: step 1/4.</text>
</comment>
<comment type="subcellular location">
    <subcellularLocation>
        <location evidence="1">Plastid</location>
        <location evidence="1">Chloroplast outer membrane</location>
        <topology evidence="1">Single-pass membrane protein</topology>
    </subcellularLocation>
</comment>
<comment type="tissue specificity">
    <text evidence="5">Expressed specifically in stamen.</text>
</comment>
<comment type="miscellaneous">
    <text>Expression may pollen-specific.</text>
</comment>
<comment type="similarity">
    <text evidence="4 6">Belongs to the hexokinase family.</text>
</comment>
<comment type="sequence caution" evidence="6">
    <conflict type="erroneous gene model prediction">
        <sequence resource="EMBL-CDS" id="AAT01343"/>
    </conflict>
</comment>
<gene>
    <name type="primary">HXK10</name>
    <name type="synonym">HXK7</name>
    <name type="ordered locus">Os05g0375100</name>
    <name type="ordered locus">LOC_Os05g31110</name>
    <name type="ORF">OJ1005_E12.7</name>
</gene>
<keyword id="KW-0067">ATP-binding</keyword>
<keyword id="KW-0150">Chloroplast</keyword>
<keyword id="KW-0324">Glycolysis</keyword>
<keyword id="KW-0418">Kinase</keyword>
<keyword id="KW-0472">Membrane</keyword>
<keyword id="KW-0547">Nucleotide-binding</keyword>
<keyword id="KW-0934">Plastid</keyword>
<keyword id="KW-1002">Plastid outer membrane</keyword>
<keyword id="KW-1185">Reference proteome</keyword>
<keyword id="KW-0808">Transferase</keyword>
<keyword id="KW-0812">Transmembrane</keyword>
<keyword id="KW-1133">Transmembrane helix</keyword>
<reference key="1">
    <citation type="journal article" date="2006" name="Planta">
        <title>Structure, expression, and functional analysis of the hexokinase gene family in rice (Oryza sativa L.).</title>
        <authorList>
            <person name="Cho J.-I."/>
            <person name="Ryoo N."/>
            <person name="Ko S."/>
            <person name="Lee S.-K."/>
            <person name="Lee J."/>
            <person name="Jung K.-H."/>
            <person name="Lee Y.-H."/>
            <person name="Bhoo S.H."/>
            <person name="Winderickx J."/>
            <person name="An G."/>
            <person name="Hahn T.-R."/>
            <person name="Jeon J.-S."/>
        </authorList>
    </citation>
    <scope>NUCLEOTIDE SEQUENCE [MRNA]</scope>
    <scope>FUNCTION</scope>
    <scope>TISSUE SPECIFICITY</scope>
    <scope>INDUCTION</scope>
    <scope>NOMENCLATURE</scope>
    <source>
        <strain>cv. Jinmi</strain>
    </source>
</reference>
<reference key="2">
    <citation type="submission" date="2005-01" db="EMBL/GenBank/DDBJ databases">
        <title>The hexokinase gene family in rice.</title>
        <authorList>
            <person name="Wang Y.D."/>
            <person name="Cheng W."/>
            <person name="Wang X.S."/>
            <person name="Zhou X.J."/>
        </authorList>
    </citation>
    <scope>NUCLEOTIDE SEQUENCE [MRNA]</scope>
    <source>
        <strain>cv. Zhonghua 15</strain>
        <tissue>Flower</tissue>
    </source>
</reference>
<reference key="3">
    <citation type="journal article" date="2005" name="Mol. Genet. Genomics">
        <title>A fine physical map of the rice chromosome 5.</title>
        <authorList>
            <person name="Cheng C.-H."/>
            <person name="Chung M.C."/>
            <person name="Liu S.-M."/>
            <person name="Chen S.-K."/>
            <person name="Kao F.Y."/>
            <person name="Lin S.-J."/>
            <person name="Hsiao S.-H."/>
            <person name="Tseng I.C."/>
            <person name="Hsing Y.-I.C."/>
            <person name="Wu H.-P."/>
            <person name="Chen C.-S."/>
            <person name="Shaw J.-F."/>
            <person name="Wu J."/>
            <person name="Matsumoto T."/>
            <person name="Sasaki T."/>
            <person name="Chen H.-C."/>
            <person name="Chow T.-Y."/>
        </authorList>
    </citation>
    <scope>NUCLEOTIDE SEQUENCE [LARGE SCALE GENOMIC DNA]</scope>
    <source>
        <strain>cv. Nipponbare</strain>
    </source>
</reference>
<reference key="4">
    <citation type="journal article" date="2005" name="Nature">
        <title>The map-based sequence of the rice genome.</title>
        <authorList>
            <consortium name="International rice genome sequencing project (IRGSP)"/>
        </authorList>
    </citation>
    <scope>NUCLEOTIDE SEQUENCE [LARGE SCALE GENOMIC DNA]</scope>
    <source>
        <strain>cv. Nipponbare</strain>
    </source>
</reference>
<reference key="5">
    <citation type="journal article" date="2013" name="Rice">
        <title>Improvement of the Oryza sativa Nipponbare reference genome using next generation sequence and optical map data.</title>
        <authorList>
            <person name="Kawahara Y."/>
            <person name="de la Bastide M."/>
            <person name="Hamilton J.P."/>
            <person name="Kanamori H."/>
            <person name="McCombie W.R."/>
            <person name="Ouyang S."/>
            <person name="Schwartz D.C."/>
            <person name="Tanaka T."/>
            <person name="Wu J."/>
            <person name="Zhou S."/>
            <person name="Childs K.L."/>
            <person name="Davidson R.M."/>
            <person name="Lin H."/>
            <person name="Quesada-Ocampo L."/>
            <person name="Vaillancourt B."/>
            <person name="Sakai H."/>
            <person name="Lee S.S."/>
            <person name="Kim J."/>
            <person name="Numa H."/>
            <person name="Itoh T."/>
            <person name="Buell C.R."/>
            <person name="Matsumoto T."/>
        </authorList>
    </citation>
    <scope>GENOME REANNOTATION</scope>
    <source>
        <strain>cv. Nipponbare</strain>
    </source>
</reference>
<dbReference type="EC" id="2.7.1.1" evidence="7"/>
<dbReference type="EMBL" id="DQ116392">
    <property type="protein sequence ID" value="AAZ93627.1"/>
    <property type="molecule type" value="mRNA"/>
</dbReference>
<dbReference type="EMBL" id="AY884170">
    <property type="protein sequence ID" value="AAX68423.1"/>
    <property type="molecule type" value="mRNA"/>
</dbReference>
<dbReference type="EMBL" id="AC108874">
    <property type="protein sequence ID" value="AAT01343.1"/>
    <property type="status" value="ALT_SEQ"/>
    <property type="molecule type" value="Genomic_DNA"/>
</dbReference>
<dbReference type="EMBL" id="AP014961">
    <property type="protein sequence ID" value="BAS93721.1"/>
    <property type="molecule type" value="Genomic_DNA"/>
</dbReference>
<dbReference type="RefSeq" id="XP_015638932.1">
    <property type="nucleotide sequence ID" value="XM_015783446.1"/>
</dbReference>
<dbReference type="SMR" id="Q2KNB5"/>
<dbReference type="FunCoup" id="Q2KNB5">
    <property type="interactions" value="2546"/>
</dbReference>
<dbReference type="STRING" id="39947.Q2KNB5"/>
<dbReference type="PaxDb" id="39947-Q2KNB5"/>
<dbReference type="EnsemblPlants" id="Os05t0375100-01">
    <property type="protein sequence ID" value="Os05t0375100-01"/>
    <property type="gene ID" value="Os05g0375100"/>
</dbReference>
<dbReference type="Gramene" id="Os05t0375100-01">
    <property type="protein sequence ID" value="Os05t0375100-01"/>
    <property type="gene ID" value="Os05g0375100"/>
</dbReference>
<dbReference type="eggNOG" id="KOG1369">
    <property type="taxonomic scope" value="Eukaryota"/>
</dbReference>
<dbReference type="HOGENOM" id="CLU_014393_5_1_1"/>
<dbReference type="InParanoid" id="Q2KNB5"/>
<dbReference type="OMA" id="HYDQAFE"/>
<dbReference type="OrthoDB" id="419537at2759"/>
<dbReference type="BRENDA" id="2.7.1.1">
    <property type="organism ID" value="4460"/>
</dbReference>
<dbReference type="PlantReactome" id="R-OSA-1119570">
    <property type="pathway name" value="Cytosolic glycolysis"/>
</dbReference>
<dbReference type="PlantReactome" id="R-OSA-1119595">
    <property type="pathway name" value="Mannose degradation"/>
</dbReference>
<dbReference type="PlantReactome" id="R-OSA-1119601">
    <property type="pathway name" value="Trehalose degradation II"/>
</dbReference>
<dbReference type="PlantReactome" id="R-OSA-1119628">
    <property type="pathway name" value="GDP-mannose metabolism"/>
</dbReference>
<dbReference type="UniPathway" id="UPA00109">
    <property type="reaction ID" value="UER00180"/>
</dbReference>
<dbReference type="UniPathway" id="UPA00242"/>
<dbReference type="Proteomes" id="UP000000763">
    <property type="component" value="Chromosome 5"/>
</dbReference>
<dbReference type="Proteomes" id="UP000059680">
    <property type="component" value="Chromosome 5"/>
</dbReference>
<dbReference type="GO" id="GO:0009707">
    <property type="term" value="C:chloroplast outer membrane"/>
    <property type="evidence" value="ECO:0007669"/>
    <property type="project" value="UniProtKB-SubCell"/>
</dbReference>
<dbReference type="GO" id="GO:0005829">
    <property type="term" value="C:cytosol"/>
    <property type="evidence" value="ECO:0000318"/>
    <property type="project" value="GO_Central"/>
</dbReference>
<dbReference type="GO" id="GO:0005739">
    <property type="term" value="C:mitochondrion"/>
    <property type="evidence" value="ECO:0000318"/>
    <property type="project" value="GO_Central"/>
</dbReference>
<dbReference type="GO" id="GO:0005524">
    <property type="term" value="F:ATP binding"/>
    <property type="evidence" value="ECO:0007669"/>
    <property type="project" value="UniProtKB-KW"/>
</dbReference>
<dbReference type="GO" id="GO:0005536">
    <property type="term" value="F:D-glucose binding"/>
    <property type="evidence" value="ECO:0007669"/>
    <property type="project" value="InterPro"/>
</dbReference>
<dbReference type="GO" id="GO:0008865">
    <property type="term" value="F:fructokinase activity"/>
    <property type="evidence" value="ECO:0007669"/>
    <property type="project" value="RHEA"/>
</dbReference>
<dbReference type="GO" id="GO:0004340">
    <property type="term" value="F:glucokinase activity"/>
    <property type="evidence" value="ECO:0007669"/>
    <property type="project" value="RHEA"/>
</dbReference>
<dbReference type="GO" id="GO:0006096">
    <property type="term" value="P:glycolytic process"/>
    <property type="evidence" value="ECO:0007669"/>
    <property type="project" value="UniProtKB-UniPathway"/>
</dbReference>
<dbReference type="GO" id="GO:0019318">
    <property type="term" value="P:hexose metabolic process"/>
    <property type="evidence" value="ECO:0007669"/>
    <property type="project" value="UniProtKB-UniPathway"/>
</dbReference>
<dbReference type="GO" id="GO:0001678">
    <property type="term" value="P:intracellular glucose homeostasis"/>
    <property type="evidence" value="ECO:0007669"/>
    <property type="project" value="InterPro"/>
</dbReference>
<dbReference type="FunFam" id="3.30.420.40:FF:000034">
    <property type="entry name" value="Phosphotransferase"/>
    <property type="match status" value="1"/>
</dbReference>
<dbReference type="Gene3D" id="3.30.420.40">
    <property type="match status" value="1"/>
</dbReference>
<dbReference type="Gene3D" id="3.40.367.20">
    <property type="match status" value="1"/>
</dbReference>
<dbReference type="InterPro" id="IPR043129">
    <property type="entry name" value="ATPase_NBD"/>
</dbReference>
<dbReference type="InterPro" id="IPR001312">
    <property type="entry name" value="Hexokinase"/>
</dbReference>
<dbReference type="InterPro" id="IPR019807">
    <property type="entry name" value="Hexokinase_BS"/>
</dbReference>
<dbReference type="InterPro" id="IPR022673">
    <property type="entry name" value="Hexokinase_C"/>
</dbReference>
<dbReference type="InterPro" id="IPR022672">
    <property type="entry name" value="Hexokinase_N"/>
</dbReference>
<dbReference type="PANTHER" id="PTHR19443">
    <property type="entry name" value="HEXOKINASE"/>
    <property type="match status" value="1"/>
</dbReference>
<dbReference type="PANTHER" id="PTHR19443:SF19">
    <property type="entry name" value="HEXOKINASE-10"/>
    <property type="match status" value="1"/>
</dbReference>
<dbReference type="Pfam" id="PF00349">
    <property type="entry name" value="Hexokinase_1"/>
    <property type="match status" value="1"/>
</dbReference>
<dbReference type="Pfam" id="PF03727">
    <property type="entry name" value="Hexokinase_2"/>
    <property type="match status" value="1"/>
</dbReference>
<dbReference type="PRINTS" id="PR00475">
    <property type="entry name" value="HEXOKINASE"/>
</dbReference>
<dbReference type="SUPFAM" id="SSF53067">
    <property type="entry name" value="Actin-like ATPase domain"/>
    <property type="match status" value="2"/>
</dbReference>
<dbReference type="PROSITE" id="PS00378">
    <property type="entry name" value="HEXOKINASE_1"/>
    <property type="match status" value="1"/>
</dbReference>
<dbReference type="PROSITE" id="PS51748">
    <property type="entry name" value="HEXOKINASE_2"/>
    <property type="match status" value="1"/>
</dbReference>